<accession>Q5WZX8</accession>
<evidence type="ECO:0000255" key="1">
    <source>
        <dbReference type="HAMAP-Rule" id="MF_00338"/>
    </source>
</evidence>
<sequence length="105" mass="11193">MTIMITTGNSFEGKVIKQYLGIVRGIVVRSPTISQGLMGGLKSIVGGKIGAYSQMCEHAREEAFQLMIEHAQALNANGIIAMRYDTGEIGQAGTEVLCYGTAVII</sequence>
<comment type="similarity">
    <text evidence="1">Belongs to the UPF0145 family.</text>
</comment>
<gene>
    <name type="ordered locus">lpl0253</name>
</gene>
<proteinExistence type="inferred from homology"/>
<dbReference type="EMBL" id="CR628337">
    <property type="protein sequence ID" value="CAH14484.1"/>
    <property type="molecule type" value="Genomic_DNA"/>
</dbReference>
<dbReference type="RefSeq" id="WP_011214518.1">
    <property type="nucleotide sequence ID" value="NC_006369.1"/>
</dbReference>
<dbReference type="SMR" id="Q5WZX8"/>
<dbReference type="KEGG" id="lpf:lpl0253"/>
<dbReference type="LegioList" id="lpl0253"/>
<dbReference type="HOGENOM" id="CLU_117144_1_1_6"/>
<dbReference type="Proteomes" id="UP000002517">
    <property type="component" value="Chromosome"/>
</dbReference>
<dbReference type="Gene3D" id="3.30.110.70">
    <property type="entry name" value="Hypothetical protein apc22750. Chain B"/>
    <property type="match status" value="1"/>
</dbReference>
<dbReference type="HAMAP" id="MF_00338">
    <property type="entry name" value="UPF0145"/>
    <property type="match status" value="1"/>
</dbReference>
<dbReference type="InterPro" id="IPR035439">
    <property type="entry name" value="UPF0145_dom_sf"/>
</dbReference>
<dbReference type="InterPro" id="IPR002765">
    <property type="entry name" value="UPF0145_YbjQ-like"/>
</dbReference>
<dbReference type="PANTHER" id="PTHR34068:SF2">
    <property type="entry name" value="UPF0145 PROTEIN SCO3412"/>
    <property type="match status" value="1"/>
</dbReference>
<dbReference type="PANTHER" id="PTHR34068">
    <property type="entry name" value="UPF0145 PROTEIN YBJQ"/>
    <property type="match status" value="1"/>
</dbReference>
<dbReference type="Pfam" id="PF01906">
    <property type="entry name" value="YbjQ_1"/>
    <property type="match status" value="1"/>
</dbReference>
<dbReference type="SUPFAM" id="SSF117782">
    <property type="entry name" value="YbjQ-like"/>
    <property type="match status" value="1"/>
</dbReference>
<name>Y253_LEGPL</name>
<reference key="1">
    <citation type="journal article" date="2004" name="Nat. Genet.">
        <title>Evidence in the Legionella pneumophila genome for exploitation of host cell functions and high genome plasticity.</title>
        <authorList>
            <person name="Cazalet C."/>
            <person name="Rusniok C."/>
            <person name="Brueggemann H."/>
            <person name="Zidane N."/>
            <person name="Magnier A."/>
            <person name="Ma L."/>
            <person name="Tichit M."/>
            <person name="Jarraud S."/>
            <person name="Bouchier C."/>
            <person name="Vandenesch F."/>
            <person name="Kunst F."/>
            <person name="Etienne J."/>
            <person name="Glaser P."/>
            <person name="Buchrieser C."/>
        </authorList>
    </citation>
    <scope>NUCLEOTIDE SEQUENCE [LARGE SCALE GENOMIC DNA]</scope>
    <source>
        <strain>Lens</strain>
    </source>
</reference>
<organism>
    <name type="scientific">Legionella pneumophila (strain Lens)</name>
    <dbReference type="NCBI Taxonomy" id="297245"/>
    <lineage>
        <taxon>Bacteria</taxon>
        <taxon>Pseudomonadati</taxon>
        <taxon>Pseudomonadota</taxon>
        <taxon>Gammaproteobacteria</taxon>
        <taxon>Legionellales</taxon>
        <taxon>Legionellaceae</taxon>
        <taxon>Legionella</taxon>
    </lineage>
</organism>
<feature type="chain" id="PRO_1000013012" description="UPF0145 protein lpl0253">
    <location>
        <begin position="1"/>
        <end position="105"/>
    </location>
</feature>
<protein>
    <recommendedName>
        <fullName evidence="1">UPF0145 protein lpl0253</fullName>
    </recommendedName>
</protein>